<sequence>MSLTRLLIRDFRNIETADLALSPGFNFLVGANGSGKTSVLEAIYTLGHGRAFRSLQIGRVIRHEQEAFVLHGRLQGEERETAIGLTKDKQGDSKVRIDGTDGHKVAELAHLMPMQLITPEGFTLLNGGPKYRRAFLDWGCFHNEPGFFTAWSNLKRLLKQRNAALRQVTRYEQLRPWDKELIPLAEQISTWRAEYSAGIAADMADTCKQFLPEFSLTFSFQRGWEKETEYAEVLERNFERDRQLTYTAHGPHKADLRIRADGAPVEDTLSRGQLKLLMCALRLAQGEFLTRESGRRCLYLIDDFASELDDERRGLLASRLKATQSQVFVSAISAEHVIDMSDENSKMFTVEKGKITD</sequence>
<accession>A8A6G1</accession>
<proteinExistence type="inferred from homology"/>
<comment type="function">
    <text evidence="1">The RecF protein is involved in DNA metabolism; it is required for DNA replication and normal SOS inducibility. RecF binds preferentially to single-stranded, linear DNA. It also seems to bind ATP.</text>
</comment>
<comment type="subcellular location">
    <subcellularLocation>
        <location evidence="1">Cytoplasm</location>
    </subcellularLocation>
</comment>
<comment type="similarity">
    <text evidence="1">Belongs to the RecF family.</text>
</comment>
<gene>
    <name evidence="1" type="primary">recF</name>
    <name type="ordered locus">EcHS_A3913</name>
</gene>
<evidence type="ECO:0000255" key="1">
    <source>
        <dbReference type="HAMAP-Rule" id="MF_00365"/>
    </source>
</evidence>
<keyword id="KW-0067">ATP-binding</keyword>
<keyword id="KW-0963">Cytoplasm</keyword>
<keyword id="KW-0227">DNA damage</keyword>
<keyword id="KW-0234">DNA repair</keyword>
<keyword id="KW-0235">DNA replication</keyword>
<keyword id="KW-0238">DNA-binding</keyword>
<keyword id="KW-0547">Nucleotide-binding</keyword>
<keyword id="KW-0742">SOS response</keyword>
<organism>
    <name type="scientific">Escherichia coli O9:H4 (strain HS)</name>
    <dbReference type="NCBI Taxonomy" id="331112"/>
    <lineage>
        <taxon>Bacteria</taxon>
        <taxon>Pseudomonadati</taxon>
        <taxon>Pseudomonadota</taxon>
        <taxon>Gammaproteobacteria</taxon>
        <taxon>Enterobacterales</taxon>
        <taxon>Enterobacteriaceae</taxon>
        <taxon>Escherichia</taxon>
    </lineage>
</organism>
<reference key="1">
    <citation type="journal article" date="2008" name="J. Bacteriol.">
        <title>The pangenome structure of Escherichia coli: comparative genomic analysis of E. coli commensal and pathogenic isolates.</title>
        <authorList>
            <person name="Rasko D.A."/>
            <person name="Rosovitz M.J."/>
            <person name="Myers G.S.A."/>
            <person name="Mongodin E.F."/>
            <person name="Fricke W.F."/>
            <person name="Gajer P."/>
            <person name="Crabtree J."/>
            <person name="Sebaihia M."/>
            <person name="Thomson N.R."/>
            <person name="Chaudhuri R."/>
            <person name="Henderson I.R."/>
            <person name="Sperandio V."/>
            <person name="Ravel J."/>
        </authorList>
    </citation>
    <scope>NUCLEOTIDE SEQUENCE [LARGE SCALE GENOMIC DNA]</scope>
    <source>
        <strain>HS</strain>
    </source>
</reference>
<name>RECF_ECOHS</name>
<protein>
    <recommendedName>
        <fullName evidence="1">DNA replication and repair protein RecF</fullName>
    </recommendedName>
</protein>
<feature type="chain" id="PRO_1000059902" description="DNA replication and repair protein RecF">
    <location>
        <begin position="1"/>
        <end position="357"/>
    </location>
</feature>
<feature type="binding site" evidence="1">
    <location>
        <begin position="30"/>
        <end position="37"/>
    </location>
    <ligand>
        <name>ATP</name>
        <dbReference type="ChEBI" id="CHEBI:30616"/>
    </ligand>
</feature>
<dbReference type="EMBL" id="CP000802">
    <property type="protein sequence ID" value="ABV08115.1"/>
    <property type="molecule type" value="Genomic_DNA"/>
</dbReference>
<dbReference type="RefSeq" id="WP_000060112.1">
    <property type="nucleotide sequence ID" value="NC_009800.1"/>
</dbReference>
<dbReference type="SMR" id="A8A6G1"/>
<dbReference type="GeneID" id="93778441"/>
<dbReference type="KEGG" id="ecx:EcHS_A3913"/>
<dbReference type="HOGENOM" id="CLU_040267_0_0_6"/>
<dbReference type="GO" id="GO:0005737">
    <property type="term" value="C:cytoplasm"/>
    <property type="evidence" value="ECO:0007669"/>
    <property type="project" value="UniProtKB-SubCell"/>
</dbReference>
<dbReference type="GO" id="GO:0005524">
    <property type="term" value="F:ATP binding"/>
    <property type="evidence" value="ECO:0007669"/>
    <property type="project" value="UniProtKB-UniRule"/>
</dbReference>
<dbReference type="GO" id="GO:0003697">
    <property type="term" value="F:single-stranded DNA binding"/>
    <property type="evidence" value="ECO:0007669"/>
    <property type="project" value="UniProtKB-UniRule"/>
</dbReference>
<dbReference type="GO" id="GO:0006260">
    <property type="term" value="P:DNA replication"/>
    <property type="evidence" value="ECO:0007669"/>
    <property type="project" value="UniProtKB-UniRule"/>
</dbReference>
<dbReference type="GO" id="GO:0000731">
    <property type="term" value="P:DNA synthesis involved in DNA repair"/>
    <property type="evidence" value="ECO:0007669"/>
    <property type="project" value="TreeGrafter"/>
</dbReference>
<dbReference type="GO" id="GO:0006302">
    <property type="term" value="P:double-strand break repair"/>
    <property type="evidence" value="ECO:0007669"/>
    <property type="project" value="TreeGrafter"/>
</dbReference>
<dbReference type="GO" id="GO:0009432">
    <property type="term" value="P:SOS response"/>
    <property type="evidence" value="ECO:0007669"/>
    <property type="project" value="UniProtKB-UniRule"/>
</dbReference>
<dbReference type="FunFam" id="1.20.1050.90:FF:000001">
    <property type="entry name" value="DNA replication and repair protein RecF"/>
    <property type="match status" value="1"/>
</dbReference>
<dbReference type="Gene3D" id="3.40.50.300">
    <property type="entry name" value="P-loop containing nucleotide triphosphate hydrolases"/>
    <property type="match status" value="1"/>
</dbReference>
<dbReference type="Gene3D" id="1.20.1050.90">
    <property type="entry name" value="RecF/RecN/SMC, N-terminal domain"/>
    <property type="match status" value="1"/>
</dbReference>
<dbReference type="HAMAP" id="MF_00365">
    <property type="entry name" value="RecF"/>
    <property type="match status" value="1"/>
</dbReference>
<dbReference type="InterPro" id="IPR001238">
    <property type="entry name" value="DNA-binding_RecF"/>
</dbReference>
<dbReference type="InterPro" id="IPR018078">
    <property type="entry name" value="DNA-binding_RecF_CS"/>
</dbReference>
<dbReference type="InterPro" id="IPR027417">
    <property type="entry name" value="P-loop_NTPase"/>
</dbReference>
<dbReference type="InterPro" id="IPR003395">
    <property type="entry name" value="RecF/RecN/SMC_N"/>
</dbReference>
<dbReference type="InterPro" id="IPR042174">
    <property type="entry name" value="RecF_2"/>
</dbReference>
<dbReference type="NCBIfam" id="TIGR00611">
    <property type="entry name" value="recf"/>
    <property type="match status" value="1"/>
</dbReference>
<dbReference type="PANTHER" id="PTHR32182">
    <property type="entry name" value="DNA REPLICATION AND REPAIR PROTEIN RECF"/>
    <property type="match status" value="1"/>
</dbReference>
<dbReference type="PANTHER" id="PTHR32182:SF0">
    <property type="entry name" value="DNA REPLICATION AND REPAIR PROTEIN RECF"/>
    <property type="match status" value="1"/>
</dbReference>
<dbReference type="Pfam" id="PF02463">
    <property type="entry name" value="SMC_N"/>
    <property type="match status" value="1"/>
</dbReference>
<dbReference type="SUPFAM" id="SSF52540">
    <property type="entry name" value="P-loop containing nucleoside triphosphate hydrolases"/>
    <property type="match status" value="1"/>
</dbReference>
<dbReference type="PROSITE" id="PS00617">
    <property type="entry name" value="RECF_1"/>
    <property type="match status" value="1"/>
</dbReference>
<dbReference type="PROSITE" id="PS00618">
    <property type="entry name" value="RECF_2"/>
    <property type="match status" value="1"/>
</dbReference>